<dbReference type="EC" id="5.3.1.16" evidence="1"/>
<dbReference type="EMBL" id="AE016795">
    <property type="protein sequence ID" value="AAO11248.1"/>
    <property type="molecule type" value="Genomic_DNA"/>
</dbReference>
<dbReference type="RefSeq" id="WP_011080735.1">
    <property type="nucleotide sequence ID" value="NC_004459.3"/>
</dbReference>
<dbReference type="SMR" id="Q8D8Q4"/>
<dbReference type="KEGG" id="vvu:VV1_2915"/>
<dbReference type="HOGENOM" id="CLU_048577_1_2_6"/>
<dbReference type="UniPathway" id="UPA00031">
    <property type="reaction ID" value="UER00009"/>
</dbReference>
<dbReference type="Proteomes" id="UP000002275">
    <property type="component" value="Chromosome 1"/>
</dbReference>
<dbReference type="GO" id="GO:0005737">
    <property type="term" value="C:cytoplasm"/>
    <property type="evidence" value="ECO:0007669"/>
    <property type="project" value="UniProtKB-SubCell"/>
</dbReference>
<dbReference type="GO" id="GO:0003949">
    <property type="term" value="F:1-(5-phosphoribosyl)-5-[(5-phosphoribosylamino)methylideneamino]imidazole-4-carboxamide isomerase activity"/>
    <property type="evidence" value="ECO:0007669"/>
    <property type="project" value="UniProtKB-UniRule"/>
</dbReference>
<dbReference type="GO" id="GO:0000105">
    <property type="term" value="P:L-histidine biosynthetic process"/>
    <property type="evidence" value="ECO:0007669"/>
    <property type="project" value="UniProtKB-UniRule"/>
</dbReference>
<dbReference type="GO" id="GO:0000162">
    <property type="term" value="P:L-tryptophan biosynthetic process"/>
    <property type="evidence" value="ECO:0007669"/>
    <property type="project" value="TreeGrafter"/>
</dbReference>
<dbReference type="CDD" id="cd04732">
    <property type="entry name" value="HisA"/>
    <property type="match status" value="1"/>
</dbReference>
<dbReference type="FunFam" id="3.20.20.70:FF:000009">
    <property type="entry name" value="1-(5-phosphoribosyl)-5-[(5-phosphoribosylamino)methylideneamino] imidazole-4-carboxamide isomerase"/>
    <property type="match status" value="1"/>
</dbReference>
<dbReference type="Gene3D" id="3.20.20.70">
    <property type="entry name" value="Aldolase class I"/>
    <property type="match status" value="1"/>
</dbReference>
<dbReference type="HAMAP" id="MF_01014">
    <property type="entry name" value="HisA"/>
    <property type="match status" value="1"/>
</dbReference>
<dbReference type="InterPro" id="IPR013785">
    <property type="entry name" value="Aldolase_TIM"/>
</dbReference>
<dbReference type="InterPro" id="IPR006062">
    <property type="entry name" value="His_biosynth"/>
</dbReference>
<dbReference type="InterPro" id="IPR006063">
    <property type="entry name" value="HisA_bact_arch"/>
</dbReference>
<dbReference type="InterPro" id="IPR044524">
    <property type="entry name" value="Isoase_HisA-like"/>
</dbReference>
<dbReference type="InterPro" id="IPR023016">
    <property type="entry name" value="Isoase_HisA-like_bact"/>
</dbReference>
<dbReference type="InterPro" id="IPR011060">
    <property type="entry name" value="RibuloseP-bd_barrel"/>
</dbReference>
<dbReference type="NCBIfam" id="TIGR00007">
    <property type="entry name" value="1-(5-phosphoribosyl)-5-[(5-phosphoribosylamino)methylideneamino]imidazole-4-carboxamide isomerase"/>
    <property type="match status" value="1"/>
</dbReference>
<dbReference type="PANTHER" id="PTHR43090">
    <property type="entry name" value="1-(5-PHOSPHORIBOSYL)-5-[(5-PHOSPHORIBOSYLAMINO)METHYLIDENEAMINO] IMIDAZOLE-4-CARBOXAMIDE ISOMERASE"/>
    <property type="match status" value="1"/>
</dbReference>
<dbReference type="PANTHER" id="PTHR43090:SF2">
    <property type="entry name" value="1-(5-PHOSPHORIBOSYL)-5-[(5-PHOSPHORIBOSYLAMINO)METHYLIDENEAMINO] IMIDAZOLE-4-CARBOXAMIDE ISOMERASE"/>
    <property type="match status" value="1"/>
</dbReference>
<dbReference type="Pfam" id="PF00977">
    <property type="entry name" value="His_biosynth"/>
    <property type="match status" value="1"/>
</dbReference>
<dbReference type="SUPFAM" id="SSF51366">
    <property type="entry name" value="Ribulose-phoshate binding barrel"/>
    <property type="match status" value="1"/>
</dbReference>
<name>HIS4_VIBVU</name>
<keyword id="KW-0028">Amino-acid biosynthesis</keyword>
<keyword id="KW-0963">Cytoplasm</keyword>
<keyword id="KW-0368">Histidine biosynthesis</keyword>
<keyword id="KW-0413">Isomerase</keyword>
<comment type="catalytic activity">
    <reaction evidence="1">
        <text>1-(5-phospho-beta-D-ribosyl)-5-[(5-phospho-beta-D-ribosylamino)methylideneamino]imidazole-4-carboxamide = 5-[(5-phospho-1-deoxy-D-ribulos-1-ylimino)methylamino]-1-(5-phospho-beta-D-ribosyl)imidazole-4-carboxamide</text>
        <dbReference type="Rhea" id="RHEA:15469"/>
        <dbReference type="ChEBI" id="CHEBI:58435"/>
        <dbReference type="ChEBI" id="CHEBI:58525"/>
        <dbReference type="EC" id="5.3.1.16"/>
    </reaction>
</comment>
<comment type="pathway">
    <text evidence="1">Amino-acid biosynthesis; L-histidine biosynthesis; L-histidine from 5-phospho-alpha-D-ribose 1-diphosphate: step 4/9.</text>
</comment>
<comment type="subcellular location">
    <subcellularLocation>
        <location evidence="1">Cytoplasm</location>
    </subcellularLocation>
</comment>
<comment type="similarity">
    <text evidence="1">Belongs to the HisA/HisF family.</text>
</comment>
<gene>
    <name evidence="1" type="primary">hisA</name>
    <name type="ordered locus">VV1_2915</name>
</gene>
<proteinExistence type="inferred from homology"/>
<protein>
    <recommendedName>
        <fullName evidence="1">1-(5-phosphoribosyl)-5-[(5-phosphoribosylamino)methylideneamino] imidazole-4-carboxamide isomerase</fullName>
        <ecNumber evidence="1">5.3.1.16</ecNumber>
    </recommendedName>
    <alternativeName>
        <fullName evidence="1">Phosphoribosylformimino-5-aminoimidazole carboxamide ribotide isomerase</fullName>
    </alternativeName>
</protein>
<evidence type="ECO:0000255" key="1">
    <source>
        <dbReference type="HAMAP-Rule" id="MF_01014"/>
    </source>
</evidence>
<feature type="chain" id="PRO_0000142073" description="1-(5-phosphoribosyl)-5-[(5-phosphoribosylamino)methylideneamino] imidazole-4-carboxamide isomerase">
    <location>
        <begin position="1"/>
        <end position="245"/>
    </location>
</feature>
<feature type="active site" description="Proton acceptor" evidence="1">
    <location>
        <position position="7"/>
    </location>
</feature>
<feature type="active site" description="Proton donor" evidence="1">
    <location>
        <position position="129"/>
    </location>
</feature>
<reference key="1">
    <citation type="submission" date="2002-12" db="EMBL/GenBank/DDBJ databases">
        <title>Complete genome sequence of Vibrio vulnificus CMCP6.</title>
        <authorList>
            <person name="Rhee J.H."/>
            <person name="Kim S.Y."/>
            <person name="Chung S.S."/>
            <person name="Kim J.J."/>
            <person name="Moon Y.H."/>
            <person name="Jeong H."/>
            <person name="Choy H.E."/>
        </authorList>
    </citation>
    <scope>NUCLEOTIDE SEQUENCE [LARGE SCALE GENOMIC DNA]</scope>
    <source>
        <strain>CMCP6</strain>
    </source>
</reference>
<organism>
    <name type="scientific">Vibrio vulnificus (strain CMCP6)</name>
    <dbReference type="NCBI Taxonomy" id="216895"/>
    <lineage>
        <taxon>Bacteria</taxon>
        <taxon>Pseudomonadati</taxon>
        <taxon>Pseudomonadota</taxon>
        <taxon>Gammaproteobacteria</taxon>
        <taxon>Vibrionales</taxon>
        <taxon>Vibrionaceae</taxon>
        <taxon>Vibrio</taxon>
    </lineage>
</organism>
<accession>Q8D8Q4</accession>
<sequence>MIIPALDLIEGQVVRLYQGDYGQVTEYKVDPAEQFNLYHQAGANWLHLVDLTGAKDTTARQLDLIAKLLASTPANIQIGGGVRTEQDVIDLLEAGAQRVVVGSTAVKQPELVKGWMEKYGAEKIVLALDINIDQDGTRKVAISGWQEDSGVTIEALINDYLTVGLQHVLCTDISRDGTLEGSNVELYVDLCKQYPQVQFQSSGGIGSLTDIEALKGSGVAGVIVGRALLDGKFTAEEAFACWQSE</sequence>